<protein>
    <recommendedName>
        <fullName evidence="1">Cytoplasmic envelopment protein 1</fullName>
    </recommendedName>
</protein>
<organismHost>
    <name type="scientific">Equus caballus</name>
    <name type="common">Horse</name>
    <dbReference type="NCBI Taxonomy" id="9796"/>
</organismHost>
<keyword id="KW-1035">Host cytoplasm</keyword>
<keyword id="KW-1040">Host Golgi apparatus</keyword>
<keyword id="KW-1185">Reference proteome</keyword>
<keyword id="KW-0946">Virion</keyword>
<keyword id="KW-0920">Virion tegument</keyword>
<feature type="chain" id="PRO_0000406060" description="Cytoplasmic envelopment protein 1">
    <location>
        <begin position="1"/>
        <end position="276"/>
    </location>
</feature>
<sequence length="276" mass="31323">MDPLKLFTGVPKKEYPTAPKTVTPLYPNPMVCRMVLEVNRCENLCVACNSPVLVRDGALCVSQTLDYVKQKLVSDTFMGFTMACLLDCEDLVDSINLAPHVFAQRVFVFRPPNSYLLEMCVLSSMLENCETYTRRFVESLVSRARFIYSKSPCIDACFLLHSIEMMASTIIDYFKLDLEGTQPRYPGLMMYKLHGAIEGGSFESKGLLRPIYHESFKLCSDPDASFDEEEETGEAGVTFNVFYCETIFTKHLRAEAVAKVFKERCLEGFPRHQILS</sequence>
<reference key="1">
    <citation type="journal article" date="1995" name="J. Mol. Biol.">
        <title>The DNA sequence of equine herpesvirus 2.</title>
        <authorList>
            <person name="Telford E.A.R."/>
            <person name="Watson M.S."/>
            <person name="Aird H.C."/>
            <person name="Perry J."/>
            <person name="Davison A.J."/>
        </authorList>
    </citation>
    <scope>NUCLEOTIDE SEQUENCE [LARGE SCALE GENOMIC DNA]</scope>
</reference>
<accession>Q66645</accession>
<dbReference type="EMBL" id="U20824">
    <property type="protein sequence ID" value="AAC13830.1"/>
    <property type="molecule type" value="Genomic_DNA"/>
</dbReference>
<dbReference type="SMR" id="Q66645"/>
<dbReference type="KEGG" id="vg:1461074"/>
<dbReference type="Proteomes" id="UP000007083">
    <property type="component" value="Segment"/>
</dbReference>
<dbReference type="GO" id="GO:0044177">
    <property type="term" value="C:host cell Golgi apparatus"/>
    <property type="evidence" value="ECO:0007669"/>
    <property type="project" value="UniProtKB-SubCell"/>
</dbReference>
<dbReference type="GO" id="GO:0019033">
    <property type="term" value="C:viral tegument"/>
    <property type="evidence" value="ECO:0007669"/>
    <property type="project" value="UniProtKB-SubCell"/>
</dbReference>
<dbReference type="HAMAP" id="MF_04038">
    <property type="entry name" value="HSV_CEP1"/>
    <property type="match status" value="1"/>
</dbReference>
<dbReference type="InterPro" id="IPR002600">
    <property type="entry name" value="Herpes_UL7"/>
</dbReference>
<dbReference type="Pfam" id="PF01677">
    <property type="entry name" value="Herpes_UL7"/>
    <property type="match status" value="1"/>
</dbReference>
<proteinExistence type="inferred from homology"/>
<gene>
    <name type="primary">42</name>
</gene>
<name>CEP1_EHV2</name>
<comment type="function">
    <text evidence="1">Plays a critical role in cytoplasmic virus egress. Participates in the final step of tegumentation and envelope acquisition within the host cytoplasm.</text>
</comment>
<comment type="subcellular location">
    <subcellularLocation>
        <location evidence="1">Virion</location>
    </subcellularLocation>
    <subcellularLocation>
        <location evidence="1">Virion tegument</location>
    </subcellularLocation>
    <subcellularLocation>
        <location evidence="1">Host cytoplasm</location>
    </subcellularLocation>
    <subcellularLocation>
        <location evidence="1">Host Golgi apparatus</location>
    </subcellularLocation>
</comment>
<comment type="similarity">
    <text evidence="1">Belongs to the herpesviridae cytoplasmic envelopment protein 1 family.</text>
</comment>
<evidence type="ECO:0000255" key="1">
    <source>
        <dbReference type="HAMAP-Rule" id="MF_04038"/>
    </source>
</evidence>
<organism>
    <name type="scientific">Equine herpesvirus 2 (strain 86/87)</name>
    <name type="common">EHV-2</name>
    <dbReference type="NCBI Taxonomy" id="82831"/>
    <lineage>
        <taxon>Viruses</taxon>
        <taxon>Duplodnaviria</taxon>
        <taxon>Heunggongvirae</taxon>
        <taxon>Peploviricota</taxon>
        <taxon>Herviviricetes</taxon>
        <taxon>Herpesvirales</taxon>
        <taxon>Orthoherpesviridae</taxon>
        <taxon>Gammaherpesvirinae</taxon>
        <taxon>Percavirus</taxon>
        <taxon>Percavirus equidgamma2</taxon>
        <taxon>Equid gammaherpesvirus 2</taxon>
    </lineage>
</organism>